<name>PYRG_ECOLU</name>
<proteinExistence type="inferred from homology"/>
<keyword id="KW-0067">ATP-binding</keyword>
<keyword id="KW-0315">Glutamine amidotransferase</keyword>
<keyword id="KW-0436">Ligase</keyword>
<keyword id="KW-0460">Magnesium</keyword>
<keyword id="KW-0479">Metal-binding</keyword>
<keyword id="KW-0547">Nucleotide-binding</keyword>
<keyword id="KW-0665">Pyrimidine biosynthesis</keyword>
<organism>
    <name type="scientific">Escherichia coli O17:K52:H18 (strain UMN026 / ExPEC)</name>
    <dbReference type="NCBI Taxonomy" id="585056"/>
    <lineage>
        <taxon>Bacteria</taxon>
        <taxon>Pseudomonadati</taxon>
        <taxon>Pseudomonadota</taxon>
        <taxon>Gammaproteobacteria</taxon>
        <taxon>Enterobacterales</taxon>
        <taxon>Enterobacteriaceae</taxon>
        <taxon>Escherichia</taxon>
    </lineage>
</organism>
<evidence type="ECO:0000255" key="1">
    <source>
        <dbReference type="HAMAP-Rule" id="MF_01227"/>
    </source>
</evidence>
<reference key="1">
    <citation type="journal article" date="2009" name="PLoS Genet.">
        <title>Organised genome dynamics in the Escherichia coli species results in highly diverse adaptive paths.</title>
        <authorList>
            <person name="Touchon M."/>
            <person name="Hoede C."/>
            <person name="Tenaillon O."/>
            <person name="Barbe V."/>
            <person name="Baeriswyl S."/>
            <person name="Bidet P."/>
            <person name="Bingen E."/>
            <person name="Bonacorsi S."/>
            <person name="Bouchier C."/>
            <person name="Bouvet O."/>
            <person name="Calteau A."/>
            <person name="Chiapello H."/>
            <person name="Clermont O."/>
            <person name="Cruveiller S."/>
            <person name="Danchin A."/>
            <person name="Diard M."/>
            <person name="Dossat C."/>
            <person name="Karoui M.E."/>
            <person name="Frapy E."/>
            <person name="Garry L."/>
            <person name="Ghigo J.M."/>
            <person name="Gilles A.M."/>
            <person name="Johnson J."/>
            <person name="Le Bouguenec C."/>
            <person name="Lescat M."/>
            <person name="Mangenot S."/>
            <person name="Martinez-Jehanne V."/>
            <person name="Matic I."/>
            <person name="Nassif X."/>
            <person name="Oztas S."/>
            <person name="Petit M.A."/>
            <person name="Pichon C."/>
            <person name="Rouy Z."/>
            <person name="Ruf C.S."/>
            <person name="Schneider D."/>
            <person name="Tourret J."/>
            <person name="Vacherie B."/>
            <person name="Vallenet D."/>
            <person name="Medigue C."/>
            <person name="Rocha E.P.C."/>
            <person name="Denamur E."/>
        </authorList>
    </citation>
    <scope>NUCLEOTIDE SEQUENCE [LARGE SCALE GENOMIC DNA]</scope>
    <source>
        <strain>UMN026 / ExPEC</strain>
    </source>
</reference>
<accession>B7N716</accession>
<sequence length="545" mass="60374">MTTNYIFVTGGVVSSLGKGIAAASLAAILEARGLNVTIMKLDPYINVDPGTMSPIQHGEVFVTEDGAETDLDLGHYERFIRTKMSRRNNFTTGRIYSDVLRKERRGDYLGATVQVIPHITNAIKERVLEGGEGHDVVLVEIGGTVGDIESLPFLEAIRQMAVEIGREHTLFMHLTLVPYMAASGEVKTKPTQHSVKELLSIGIQPDILICRSDRAVPANERAKIALFCNVPEKAVISLKDVDSIYKIPGLLKSQGLDDYICKRFSLNCPEANLSEWEQVIFEEANPVSEVTIGMVGKYIELPDAYKSVIEALKHGGLKNRVSVNIKLIDSQDVETRGVEILKGLDAILVPGGFGYRGVEGMITTARFARENNIPYLGICLGMQVALIDYARHVANMENANSTEFVPDCKYPVVALITEWRDENGNVEVRSEKSDLGGTMRLGAQQCQLVDDSLVRQLYNAPTIVERHRHRYEVNNMLLKQIEDAGLRVAGRSGDDQLVEIIEVPNHPWFVACQFHPEFTSTPRDGHPLFAGFVKAASEFQKRQAK</sequence>
<comment type="function">
    <text evidence="1">Catalyzes the ATP-dependent amination of UTP to CTP with either L-glutamine or ammonia as the source of nitrogen. Regulates intracellular CTP levels through interactions with the four ribonucleotide triphosphates.</text>
</comment>
<comment type="catalytic activity">
    <reaction evidence="1">
        <text>UTP + L-glutamine + ATP + H2O = CTP + L-glutamate + ADP + phosphate + 2 H(+)</text>
        <dbReference type="Rhea" id="RHEA:26426"/>
        <dbReference type="ChEBI" id="CHEBI:15377"/>
        <dbReference type="ChEBI" id="CHEBI:15378"/>
        <dbReference type="ChEBI" id="CHEBI:29985"/>
        <dbReference type="ChEBI" id="CHEBI:30616"/>
        <dbReference type="ChEBI" id="CHEBI:37563"/>
        <dbReference type="ChEBI" id="CHEBI:43474"/>
        <dbReference type="ChEBI" id="CHEBI:46398"/>
        <dbReference type="ChEBI" id="CHEBI:58359"/>
        <dbReference type="ChEBI" id="CHEBI:456216"/>
        <dbReference type="EC" id="6.3.4.2"/>
    </reaction>
</comment>
<comment type="catalytic activity">
    <reaction evidence="1">
        <text>L-glutamine + H2O = L-glutamate + NH4(+)</text>
        <dbReference type="Rhea" id="RHEA:15889"/>
        <dbReference type="ChEBI" id="CHEBI:15377"/>
        <dbReference type="ChEBI" id="CHEBI:28938"/>
        <dbReference type="ChEBI" id="CHEBI:29985"/>
        <dbReference type="ChEBI" id="CHEBI:58359"/>
    </reaction>
</comment>
<comment type="catalytic activity">
    <reaction evidence="1">
        <text>UTP + NH4(+) + ATP = CTP + ADP + phosphate + 2 H(+)</text>
        <dbReference type="Rhea" id="RHEA:16597"/>
        <dbReference type="ChEBI" id="CHEBI:15378"/>
        <dbReference type="ChEBI" id="CHEBI:28938"/>
        <dbReference type="ChEBI" id="CHEBI:30616"/>
        <dbReference type="ChEBI" id="CHEBI:37563"/>
        <dbReference type="ChEBI" id="CHEBI:43474"/>
        <dbReference type="ChEBI" id="CHEBI:46398"/>
        <dbReference type="ChEBI" id="CHEBI:456216"/>
    </reaction>
</comment>
<comment type="activity regulation">
    <text evidence="1">Allosterically activated by GTP, when glutamine is the substrate; GTP has no effect on the reaction when ammonia is the substrate. The allosteric effector GTP functions by stabilizing the protein conformation that binds the tetrahedral intermediate(s) formed during glutamine hydrolysis. Inhibited by the product CTP, via allosteric rather than competitive inhibition.</text>
</comment>
<comment type="pathway">
    <text evidence="1">Pyrimidine metabolism; CTP biosynthesis via de novo pathway; CTP from UDP: step 2/2.</text>
</comment>
<comment type="subunit">
    <text evidence="1">Homotetramer.</text>
</comment>
<comment type="miscellaneous">
    <text evidence="1">CTPSs have evolved a hybrid strategy for distinguishing between UTP and CTP. The overlapping regions of the product feedback inhibitory and substrate sites recognize a common feature in both compounds, the triphosphate moiety. To differentiate isosteric substrate and product pyrimidine rings, an additional pocket far from the expected kinase/ligase catalytic site, specifically recognizes the cytosine and ribose portions of the product inhibitor.</text>
</comment>
<comment type="similarity">
    <text evidence="1">Belongs to the CTP synthase family.</text>
</comment>
<dbReference type="EC" id="6.3.4.2" evidence="1"/>
<dbReference type="EMBL" id="CU928163">
    <property type="protein sequence ID" value="CAR14277.1"/>
    <property type="molecule type" value="Genomic_DNA"/>
</dbReference>
<dbReference type="RefSeq" id="WP_000210878.1">
    <property type="nucleotide sequence ID" value="NC_011751.1"/>
</dbReference>
<dbReference type="RefSeq" id="YP_002413797.1">
    <property type="nucleotide sequence ID" value="NC_011751.1"/>
</dbReference>
<dbReference type="SMR" id="B7N716"/>
<dbReference type="STRING" id="585056.ECUMN_3111"/>
<dbReference type="MEROPS" id="C26.964"/>
<dbReference type="GeneID" id="93779218"/>
<dbReference type="KEGG" id="eum:ECUMN_3111"/>
<dbReference type="PATRIC" id="fig|585056.7.peg.3290"/>
<dbReference type="HOGENOM" id="CLU_011675_5_0_6"/>
<dbReference type="UniPathway" id="UPA00159">
    <property type="reaction ID" value="UER00277"/>
</dbReference>
<dbReference type="Proteomes" id="UP000007097">
    <property type="component" value="Chromosome"/>
</dbReference>
<dbReference type="GO" id="GO:0005829">
    <property type="term" value="C:cytosol"/>
    <property type="evidence" value="ECO:0007669"/>
    <property type="project" value="TreeGrafter"/>
</dbReference>
<dbReference type="GO" id="GO:0005524">
    <property type="term" value="F:ATP binding"/>
    <property type="evidence" value="ECO:0007669"/>
    <property type="project" value="UniProtKB-KW"/>
</dbReference>
<dbReference type="GO" id="GO:0003883">
    <property type="term" value="F:CTP synthase activity"/>
    <property type="evidence" value="ECO:0007669"/>
    <property type="project" value="UniProtKB-UniRule"/>
</dbReference>
<dbReference type="GO" id="GO:0004359">
    <property type="term" value="F:glutaminase activity"/>
    <property type="evidence" value="ECO:0007669"/>
    <property type="project" value="RHEA"/>
</dbReference>
<dbReference type="GO" id="GO:0042802">
    <property type="term" value="F:identical protein binding"/>
    <property type="evidence" value="ECO:0007669"/>
    <property type="project" value="TreeGrafter"/>
</dbReference>
<dbReference type="GO" id="GO:0046872">
    <property type="term" value="F:metal ion binding"/>
    <property type="evidence" value="ECO:0007669"/>
    <property type="project" value="UniProtKB-KW"/>
</dbReference>
<dbReference type="GO" id="GO:0044210">
    <property type="term" value="P:'de novo' CTP biosynthetic process"/>
    <property type="evidence" value="ECO:0007669"/>
    <property type="project" value="UniProtKB-UniRule"/>
</dbReference>
<dbReference type="GO" id="GO:0019856">
    <property type="term" value="P:pyrimidine nucleobase biosynthetic process"/>
    <property type="evidence" value="ECO:0007669"/>
    <property type="project" value="TreeGrafter"/>
</dbReference>
<dbReference type="CDD" id="cd03113">
    <property type="entry name" value="CTPS_N"/>
    <property type="match status" value="1"/>
</dbReference>
<dbReference type="CDD" id="cd01746">
    <property type="entry name" value="GATase1_CTP_Synthase"/>
    <property type="match status" value="1"/>
</dbReference>
<dbReference type="FunFam" id="3.40.50.300:FF:000009">
    <property type="entry name" value="CTP synthase"/>
    <property type="match status" value="1"/>
</dbReference>
<dbReference type="FunFam" id="3.40.50.880:FF:000002">
    <property type="entry name" value="CTP synthase"/>
    <property type="match status" value="1"/>
</dbReference>
<dbReference type="Gene3D" id="3.40.50.880">
    <property type="match status" value="1"/>
</dbReference>
<dbReference type="Gene3D" id="3.40.50.300">
    <property type="entry name" value="P-loop containing nucleotide triphosphate hydrolases"/>
    <property type="match status" value="1"/>
</dbReference>
<dbReference type="HAMAP" id="MF_01227">
    <property type="entry name" value="PyrG"/>
    <property type="match status" value="1"/>
</dbReference>
<dbReference type="InterPro" id="IPR029062">
    <property type="entry name" value="Class_I_gatase-like"/>
</dbReference>
<dbReference type="InterPro" id="IPR004468">
    <property type="entry name" value="CTP_synthase"/>
</dbReference>
<dbReference type="InterPro" id="IPR017456">
    <property type="entry name" value="CTP_synthase_N"/>
</dbReference>
<dbReference type="InterPro" id="IPR017926">
    <property type="entry name" value="GATASE"/>
</dbReference>
<dbReference type="InterPro" id="IPR033828">
    <property type="entry name" value="GATase1_CTP_Synthase"/>
</dbReference>
<dbReference type="InterPro" id="IPR027417">
    <property type="entry name" value="P-loop_NTPase"/>
</dbReference>
<dbReference type="NCBIfam" id="NF003792">
    <property type="entry name" value="PRK05380.1"/>
    <property type="match status" value="1"/>
</dbReference>
<dbReference type="NCBIfam" id="TIGR00337">
    <property type="entry name" value="PyrG"/>
    <property type="match status" value="1"/>
</dbReference>
<dbReference type="PANTHER" id="PTHR11550">
    <property type="entry name" value="CTP SYNTHASE"/>
    <property type="match status" value="1"/>
</dbReference>
<dbReference type="PANTHER" id="PTHR11550:SF0">
    <property type="entry name" value="CTP SYNTHASE-RELATED"/>
    <property type="match status" value="1"/>
</dbReference>
<dbReference type="Pfam" id="PF06418">
    <property type="entry name" value="CTP_synth_N"/>
    <property type="match status" value="1"/>
</dbReference>
<dbReference type="Pfam" id="PF00117">
    <property type="entry name" value="GATase"/>
    <property type="match status" value="1"/>
</dbReference>
<dbReference type="SUPFAM" id="SSF52317">
    <property type="entry name" value="Class I glutamine amidotransferase-like"/>
    <property type="match status" value="1"/>
</dbReference>
<dbReference type="SUPFAM" id="SSF52540">
    <property type="entry name" value="P-loop containing nucleoside triphosphate hydrolases"/>
    <property type="match status" value="1"/>
</dbReference>
<dbReference type="PROSITE" id="PS51273">
    <property type="entry name" value="GATASE_TYPE_1"/>
    <property type="match status" value="1"/>
</dbReference>
<feature type="chain" id="PRO_1000139448" description="CTP synthase">
    <location>
        <begin position="1"/>
        <end position="545"/>
    </location>
</feature>
<feature type="domain" description="Glutamine amidotransferase type-1" evidence="1">
    <location>
        <begin position="291"/>
        <end position="542"/>
    </location>
</feature>
<feature type="region of interest" description="Amidoligase domain" evidence="1">
    <location>
        <begin position="1"/>
        <end position="266"/>
    </location>
</feature>
<feature type="active site" description="Nucleophile; for glutamine hydrolysis" evidence="1">
    <location>
        <position position="379"/>
    </location>
</feature>
<feature type="active site" evidence="1">
    <location>
        <position position="515"/>
    </location>
</feature>
<feature type="active site" evidence="1">
    <location>
        <position position="517"/>
    </location>
</feature>
<feature type="binding site" evidence="1">
    <location>
        <position position="14"/>
    </location>
    <ligand>
        <name>CTP</name>
        <dbReference type="ChEBI" id="CHEBI:37563"/>
        <note>allosteric inhibitor</note>
    </ligand>
</feature>
<feature type="binding site" evidence="1">
    <location>
        <position position="14"/>
    </location>
    <ligand>
        <name>UTP</name>
        <dbReference type="ChEBI" id="CHEBI:46398"/>
    </ligand>
</feature>
<feature type="binding site" evidence="1">
    <location>
        <begin position="15"/>
        <end position="20"/>
    </location>
    <ligand>
        <name>ATP</name>
        <dbReference type="ChEBI" id="CHEBI:30616"/>
    </ligand>
</feature>
<feature type="binding site" evidence="1">
    <location>
        <position position="72"/>
    </location>
    <ligand>
        <name>ATP</name>
        <dbReference type="ChEBI" id="CHEBI:30616"/>
    </ligand>
</feature>
<feature type="binding site" evidence="1">
    <location>
        <position position="72"/>
    </location>
    <ligand>
        <name>Mg(2+)</name>
        <dbReference type="ChEBI" id="CHEBI:18420"/>
    </ligand>
</feature>
<feature type="binding site" evidence="1">
    <location>
        <position position="140"/>
    </location>
    <ligand>
        <name>Mg(2+)</name>
        <dbReference type="ChEBI" id="CHEBI:18420"/>
    </ligand>
</feature>
<feature type="binding site" evidence="1">
    <location>
        <begin position="147"/>
        <end position="149"/>
    </location>
    <ligand>
        <name>CTP</name>
        <dbReference type="ChEBI" id="CHEBI:37563"/>
        <note>allosteric inhibitor</note>
    </ligand>
</feature>
<feature type="binding site" evidence="1">
    <location>
        <begin position="187"/>
        <end position="192"/>
    </location>
    <ligand>
        <name>CTP</name>
        <dbReference type="ChEBI" id="CHEBI:37563"/>
        <note>allosteric inhibitor</note>
    </ligand>
</feature>
<feature type="binding site" evidence="1">
    <location>
        <begin position="187"/>
        <end position="192"/>
    </location>
    <ligand>
        <name>UTP</name>
        <dbReference type="ChEBI" id="CHEBI:46398"/>
    </ligand>
</feature>
<feature type="binding site" evidence="1">
    <location>
        <position position="223"/>
    </location>
    <ligand>
        <name>CTP</name>
        <dbReference type="ChEBI" id="CHEBI:37563"/>
        <note>allosteric inhibitor</note>
    </ligand>
</feature>
<feature type="binding site" evidence="1">
    <location>
        <position position="223"/>
    </location>
    <ligand>
        <name>UTP</name>
        <dbReference type="ChEBI" id="CHEBI:46398"/>
    </ligand>
</feature>
<feature type="binding site" evidence="1">
    <location>
        <begin position="239"/>
        <end position="241"/>
    </location>
    <ligand>
        <name>ATP</name>
        <dbReference type="ChEBI" id="CHEBI:30616"/>
    </ligand>
</feature>
<feature type="binding site" evidence="1">
    <location>
        <position position="352"/>
    </location>
    <ligand>
        <name>L-glutamine</name>
        <dbReference type="ChEBI" id="CHEBI:58359"/>
    </ligand>
</feature>
<feature type="binding site" evidence="1">
    <location>
        <begin position="380"/>
        <end position="383"/>
    </location>
    <ligand>
        <name>L-glutamine</name>
        <dbReference type="ChEBI" id="CHEBI:58359"/>
    </ligand>
</feature>
<feature type="binding site" evidence="1">
    <location>
        <position position="403"/>
    </location>
    <ligand>
        <name>L-glutamine</name>
        <dbReference type="ChEBI" id="CHEBI:58359"/>
    </ligand>
</feature>
<feature type="binding site" evidence="1">
    <location>
        <position position="470"/>
    </location>
    <ligand>
        <name>L-glutamine</name>
        <dbReference type="ChEBI" id="CHEBI:58359"/>
    </ligand>
</feature>
<gene>
    <name evidence="1" type="primary">pyrG</name>
    <name type="ordered locus">ECUMN_3111</name>
</gene>
<protein>
    <recommendedName>
        <fullName evidence="1">CTP synthase</fullName>
        <ecNumber evidence="1">6.3.4.2</ecNumber>
    </recommendedName>
    <alternativeName>
        <fullName evidence="1">Cytidine 5'-triphosphate synthase</fullName>
    </alternativeName>
    <alternativeName>
        <fullName evidence="1">Cytidine triphosphate synthetase</fullName>
        <shortName evidence="1">CTP synthetase</shortName>
        <shortName evidence="1">CTPS</shortName>
    </alternativeName>
    <alternativeName>
        <fullName evidence="1">UTP--ammonia ligase</fullName>
    </alternativeName>
</protein>